<sequence>MLPAQKHTLETLLENSVKQVVQASKGDADAAFVLPAIALERPKVAAHGDVACNVALQLAKPLGANPRQLAEQIVAALTAQPEAAGLVDAAEIAGPGFINLRLTPASKQAVIGAVLAQGRAFGASERDHDKRVLLEFVSANPTGPLHVGHGRQAALGDALANVLASQGYAVHREFYYNDAGVQIGNLAISTQARARGLKPGDAGWPEAAYNGEYIADIARDYLNGETVAASDGEPVTGKRDVEDLEAIRKFAVTYLRREQDMDLKAFGVKFDQYYLESSLYTEGRVEKTVDALIAAGMTYEQEGALWLRTTDEGDDKDRVMRKTDGTYTYFVPDVAYHVTKWERGFTKVINIQGSDHHGTIARVRAGLQGLHIGIPKGYPDYVLHKMVTVMRDGQEVKISKRAGSYVTVRDLIEWSGGATPGSEGSPELLDEATITRGRDAVRFFLISRKADTEFVFDIDLALKQNDENPVYYVQYAHARICSVINEWKSRYGATDALLPGADLSPLDSKQAMALMQKLAEYPDVLAHAAGELAPHAVAFYLRELASEFHSFYNAERVLVDEQAPRTARVALLAATRQVLENGLAMLGVSAPSKM</sequence>
<organism>
    <name type="scientific">Burkholderia mallei (strain NCTC 10247)</name>
    <dbReference type="NCBI Taxonomy" id="320389"/>
    <lineage>
        <taxon>Bacteria</taxon>
        <taxon>Pseudomonadati</taxon>
        <taxon>Pseudomonadota</taxon>
        <taxon>Betaproteobacteria</taxon>
        <taxon>Burkholderiales</taxon>
        <taxon>Burkholderiaceae</taxon>
        <taxon>Burkholderia</taxon>
        <taxon>pseudomallei group</taxon>
    </lineage>
</organism>
<accession>A3MNI3</accession>
<dbReference type="EC" id="6.1.1.19" evidence="1"/>
<dbReference type="EMBL" id="CP000548">
    <property type="protein sequence ID" value="ABO04778.1"/>
    <property type="molecule type" value="Genomic_DNA"/>
</dbReference>
<dbReference type="RefSeq" id="WP_004189649.1">
    <property type="nucleotide sequence ID" value="NZ_CP007802.1"/>
</dbReference>
<dbReference type="SMR" id="A3MNI3"/>
<dbReference type="GeneID" id="92977866"/>
<dbReference type="KEGG" id="bmaz:BM44_965"/>
<dbReference type="KEGG" id="bmn:BMA10247_2291"/>
<dbReference type="PATRIC" id="fig|320389.8.peg.1071"/>
<dbReference type="GO" id="GO:0005737">
    <property type="term" value="C:cytoplasm"/>
    <property type="evidence" value="ECO:0007669"/>
    <property type="project" value="UniProtKB-SubCell"/>
</dbReference>
<dbReference type="GO" id="GO:0004814">
    <property type="term" value="F:arginine-tRNA ligase activity"/>
    <property type="evidence" value="ECO:0007669"/>
    <property type="project" value="UniProtKB-UniRule"/>
</dbReference>
<dbReference type="GO" id="GO:0005524">
    <property type="term" value="F:ATP binding"/>
    <property type="evidence" value="ECO:0007669"/>
    <property type="project" value="UniProtKB-UniRule"/>
</dbReference>
<dbReference type="GO" id="GO:0006420">
    <property type="term" value="P:arginyl-tRNA aminoacylation"/>
    <property type="evidence" value="ECO:0007669"/>
    <property type="project" value="UniProtKB-UniRule"/>
</dbReference>
<dbReference type="CDD" id="cd07956">
    <property type="entry name" value="Anticodon_Ia_Arg"/>
    <property type="match status" value="1"/>
</dbReference>
<dbReference type="CDD" id="cd00671">
    <property type="entry name" value="ArgRS_core"/>
    <property type="match status" value="1"/>
</dbReference>
<dbReference type="FunFam" id="1.10.730.10:FF:000008">
    <property type="entry name" value="Arginine--tRNA ligase"/>
    <property type="match status" value="1"/>
</dbReference>
<dbReference type="FunFam" id="3.40.50.620:FF:000062">
    <property type="entry name" value="Arginine--tRNA ligase"/>
    <property type="match status" value="1"/>
</dbReference>
<dbReference type="Gene3D" id="3.30.1360.70">
    <property type="entry name" value="Arginyl tRNA synthetase N-terminal domain"/>
    <property type="match status" value="1"/>
</dbReference>
<dbReference type="Gene3D" id="3.40.50.620">
    <property type="entry name" value="HUPs"/>
    <property type="match status" value="1"/>
</dbReference>
<dbReference type="Gene3D" id="1.10.730.10">
    <property type="entry name" value="Isoleucyl-tRNA Synthetase, Domain 1"/>
    <property type="match status" value="1"/>
</dbReference>
<dbReference type="HAMAP" id="MF_00123">
    <property type="entry name" value="Arg_tRNA_synth"/>
    <property type="match status" value="1"/>
</dbReference>
<dbReference type="InterPro" id="IPR001412">
    <property type="entry name" value="aa-tRNA-synth_I_CS"/>
</dbReference>
<dbReference type="InterPro" id="IPR001278">
    <property type="entry name" value="Arg-tRNA-ligase"/>
</dbReference>
<dbReference type="InterPro" id="IPR005148">
    <property type="entry name" value="Arg-tRNA-synth_N"/>
</dbReference>
<dbReference type="InterPro" id="IPR036695">
    <property type="entry name" value="Arg-tRNA-synth_N_sf"/>
</dbReference>
<dbReference type="InterPro" id="IPR035684">
    <property type="entry name" value="ArgRS_core"/>
</dbReference>
<dbReference type="InterPro" id="IPR008909">
    <property type="entry name" value="DALR_anticod-bd"/>
</dbReference>
<dbReference type="InterPro" id="IPR014729">
    <property type="entry name" value="Rossmann-like_a/b/a_fold"/>
</dbReference>
<dbReference type="InterPro" id="IPR009080">
    <property type="entry name" value="tRNAsynth_Ia_anticodon-bd"/>
</dbReference>
<dbReference type="NCBIfam" id="TIGR00456">
    <property type="entry name" value="argS"/>
    <property type="match status" value="1"/>
</dbReference>
<dbReference type="PANTHER" id="PTHR11956:SF5">
    <property type="entry name" value="ARGININE--TRNA LIGASE, CYTOPLASMIC"/>
    <property type="match status" value="1"/>
</dbReference>
<dbReference type="PANTHER" id="PTHR11956">
    <property type="entry name" value="ARGINYL-TRNA SYNTHETASE"/>
    <property type="match status" value="1"/>
</dbReference>
<dbReference type="Pfam" id="PF03485">
    <property type="entry name" value="Arg_tRNA_synt_N"/>
    <property type="match status" value="1"/>
</dbReference>
<dbReference type="Pfam" id="PF05746">
    <property type="entry name" value="DALR_1"/>
    <property type="match status" value="1"/>
</dbReference>
<dbReference type="Pfam" id="PF00750">
    <property type="entry name" value="tRNA-synt_1d"/>
    <property type="match status" value="1"/>
</dbReference>
<dbReference type="PRINTS" id="PR01038">
    <property type="entry name" value="TRNASYNTHARG"/>
</dbReference>
<dbReference type="SMART" id="SM01016">
    <property type="entry name" value="Arg_tRNA_synt_N"/>
    <property type="match status" value="1"/>
</dbReference>
<dbReference type="SMART" id="SM00836">
    <property type="entry name" value="DALR_1"/>
    <property type="match status" value="1"/>
</dbReference>
<dbReference type="SUPFAM" id="SSF47323">
    <property type="entry name" value="Anticodon-binding domain of a subclass of class I aminoacyl-tRNA synthetases"/>
    <property type="match status" value="1"/>
</dbReference>
<dbReference type="SUPFAM" id="SSF55190">
    <property type="entry name" value="Arginyl-tRNA synthetase (ArgRS), N-terminal 'additional' domain"/>
    <property type="match status" value="1"/>
</dbReference>
<dbReference type="SUPFAM" id="SSF52374">
    <property type="entry name" value="Nucleotidylyl transferase"/>
    <property type="match status" value="1"/>
</dbReference>
<dbReference type="PROSITE" id="PS00178">
    <property type="entry name" value="AA_TRNA_LIGASE_I"/>
    <property type="match status" value="1"/>
</dbReference>
<proteinExistence type="inferred from homology"/>
<protein>
    <recommendedName>
        <fullName evidence="1">Arginine--tRNA ligase</fullName>
        <ecNumber evidence="1">6.1.1.19</ecNumber>
    </recommendedName>
    <alternativeName>
        <fullName evidence="1">Arginyl-tRNA synthetase</fullName>
        <shortName evidence="1">ArgRS</shortName>
    </alternativeName>
</protein>
<name>SYR_BURM7</name>
<feature type="chain" id="PRO_1000018000" description="Arginine--tRNA ligase">
    <location>
        <begin position="1"/>
        <end position="594"/>
    </location>
</feature>
<feature type="short sequence motif" description="'HIGH' region">
    <location>
        <begin position="139"/>
        <end position="149"/>
    </location>
</feature>
<gene>
    <name evidence="1" type="primary">argS</name>
    <name type="ordered locus">BMA10247_2291</name>
</gene>
<reference key="1">
    <citation type="journal article" date="2010" name="Genome Biol. Evol.">
        <title>Continuing evolution of Burkholderia mallei through genome reduction and large-scale rearrangements.</title>
        <authorList>
            <person name="Losada L."/>
            <person name="Ronning C.M."/>
            <person name="DeShazer D."/>
            <person name="Woods D."/>
            <person name="Fedorova N."/>
            <person name="Kim H.S."/>
            <person name="Shabalina S.A."/>
            <person name="Pearson T.R."/>
            <person name="Brinkac L."/>
            <person name="Tan P."/>
            <person name="Nandi T."/>
            <person name="Crabtree J."/>
            <person name="Badger J."/>
            <person name="Beckstrom-Sternberg S."/>
            <person name="Saqib M."/>
            <person name="Schutzer S.E."/>
            <person name="Keim P."/>
            <person name="Nierman W.C."/>
        </authorList>
    </citation>
    <scope>NUCLEOTIDE SEQUENCE [LARGE SCALE GENOMIC DNA]</scope>
    <source>
        <strain>NCTC 10247</strain>
    </source>
</reference>
<evidence type="ECO:0000255" key="1">
    <source>
        <dbReference type="HAMAP-Rule" id="MF_00123"/>
    </source>
</evidence>
<keyword id="KW-0030">Aminoacyl-tRNA synthetase</keyword>
<keyword id="KW-0067">ATP-binding</keyword>
<keyword id="KW-0963">Cytoplasm</keyword>
<keyword id="KW-0436">Ligase</keyword>
<keyword id="KW-0547">Nucleotide-binding</keyword>
<keyword id="KW-0648">Protein biosynthesis</keyword>
<comment type="catalytic activity">
    <reaction evidence="1">
        <text>tRNA(Arg) + L-arginine + ATP = L-arginyl-tRNA(Arg) + AMP + diphosphate</text>
        <dbReference type="Rhea" id="RHEA:20301"/>
        <dbReference type="Rhea" id="RHEA-COMP:9658"/>
        <dbReference type="Rhea" id="RHEA-COMP:9673"/>
        <dbReference type="ChEBI" id="CHEBI:30616"/>
        <dbReference type="ChEBI" id="CHEBI:32682"/>
        <dbReference type="ChEBI" id="CHEBI:33019"/>
        <dbReference type="ChEBI" id="CHEBI:78442"/>
        <dbReference type="ChEBI" id="CHEBI:78513"/>
        <dbReference type="ChEBI" id="CHEBI:456215"/>
        <dbReference type="EC" id="6.1.1.19"/>
    </reaction>
</comment>
<comment type="subunit">
    <text evidence="1">Monomer.</text>
</comment>
<comment type="subcellular location">
    <subcellularLocation>
        <location evidence="1">Cytoplasm</location>
    </subcellularLocation>
</comment>
<comment type="similarity">
    <text evidence="1">Belongs to the class-I aminoacyl-tRNA synthetase family.</text>
</comment>